<sequence length="737" mass="82613">MESQETAKRPIEPNGAVAAQDAEPATKRVKLDDAPVPQIQEEPSQPQPQPQPQPQTEDEKPTEQRQDDRDKRRGIAPIKKEYLVVPPSQVAKTAEVVDDDAAEGRTAPGAEGAAGKDGKKKRPKGQNKEREFGIFADAQRLCNSVAWTPEFSPRHCKHGERCNALHDIRKYLKEGRRPDLNVFGGKCPVWETHGKCSSGWRCLFVESHMKEIEHEDGRKELVLTEDPTKIKPEAAPLVPPEEESMDARAGVYNVVAPAVKLALSRKKIQHEKSDQYLKWMAKDSELARIHYHKQKDDDDVAKDYAAQYVEPPLKPSEKRRIYFGRETPVLAPLTTQGNLPFRRLCVELGAEITYSEMALGLPLLQGQKADWTLMRAHESEITPPRYTPTGIVDPAYDNSKDLKFGVQITAHAPWIAIKSAETLARYLPHLRVIDLNCGCPIDMVYKSGAGSALLDAPSKLERMIRGMNTVSGEVPVTAKIRMGVRDNHLTAQKLVERLALGAPDIRAVSGAPGCAAVTLHGRTRQQRYTKAADWSYIAECAALVKSFNEKADSLQDTIREADERSLPNGGRMYFVGNGDCYSHVDYFNHVDNAKVDSVMVGRGAIIKPWIFEEISAGQYLDKSATERLAYVEKFAKYGMEAWGSDELGLNYTRRFLLEFLSFFHRYVPIGLLEYLPPAMNDRPPAYKGRNELETLLASKNYLDWIKISEMFLGPAPPNFKFQPKHKSNAYENIEAEG</sequence>
<gene>
    <name type="primary">dus-3</name>
    <name type="ORF">53H1.030</name>
    <name type="ORF">NCU02619</name>
</gene>
<accession>Q7SG01</accession>
<reference key="1">
    <citation type="journal article" date="2003" name="Nucleic Acids Res.">
        <title>What's in the genome of a filamentous fungus? Analysis of the Neurospora genome sequence.</title>
        <authorList>
            <person name="Mannhaupt G."/>
            <person name="Montrone C."/>
            <person name="Haase D."/>
            <person name="Mewes H.-W."/>
            <person name="Aign V."/>
            <person name="Hoheisel J.D."/>
            <person name="Fartmann B."/>
            <person name="Nyakatura G."/>
            <person name="Kempken F."/>
            <person name="Maier J."/>
            <person name="Schulte U."/>
        </authorList>
    </citation>
    <scope>NUCLEOTIDE SEQUENCE [LARGE SCALE GENOMIC DNA]</scope>
    <source>
        <strain>ATCC 24698 / 74-OR23-1A / CBS 708.71 / DSM 1257 / FGSC 987</strain>
    </source>
</reference>
<reference key="2">
    <citation type="journal article" date="2003" name="Nature">
        <title>The genome sequence of the filamentous fungus Neurospora crassa.</title>
        <authorList>
            <person name="Galagan J.E."/>
            <person name="Calvo S.E."/>
            <person name="Borkovich K.A."/>
            <person name="Selker E.U."/>
            <person name="Read N.D."/>
            <person name="Jaffe D.B."/>
            <person name="FitzHugh W."/>
            <person name="Ma L.-J."/>
            <person name="Smirnov S."/>
            <person name="Purcell S."/>
            <person name="Rehman B."/>
            <person name="Elkins T."/>
            <person name="Engels R."/>
            <person name="Wang S."/>
            <person name="Nielsen C.B."/>
            <person name="Butler J."/>
            <person name="Endrizzi M."/>
            <person name="Qui D."/>
            <person name="Ianakiev P."/>
            <person name="Bell-Pedersen D."/>
            <person name="Nelson M.A."/>
            <person name="Werner-Washburne M."/>
            <person name="Selitrennikoff C.P."/>
            <person name="Kinsey J.A."/>
            <person name="Braun E.L."/>
            <person name="Zelter A."/>
            <person name="Schulte U."/>
            <person name="Kothe G.O."/>
            <person name="Jedd G."/>
            <person name="Mewes H.-W."/>
            <person name="Staben C."/>
            <person name="Marcotte E."/>
            <person name="Greenberg D."/>
            <person name="Roy A."/>
            <person name="Foley K."/>
            <person name="Naylor J."/>
            <person name="Stange-Thomann N."/>
            <person name="Barrett R."/>
            <person name="Gnerre S."/>
            <person name="Kamal M."/>
            <person name="Kamvysselis M."/>
            <person name="Mauceli E.W."/>
            <person name="Bielke C."/>
            <person name="Rudd S."/>
            <person name="Frishman D."/>
            <person name="Krystofova S."/>
            <person name="Rasmussen C."/>
            <person name="Metzenberg R.L."/>
            <person name="Perkins D.D."/>
            <person name="Kroken S."/>
            <person name="Cogoni C."/>
            <person name="Macino G."/>
            <person name="Catcheside D.E.A."/>
            <person name="Li W."/>
            <person name="Pratt R.J."/>
            <person name="Osmani S.A."/>
            <person name="DeSouza C.P.C."/>
            <person name="Glass N.L."/>
            <person name="Orbach M.J."/>
            <person name="Berglund J.A."/>
            <person name="Voelker R."/>
            <person name="Yarden O."/>
            <person name="Plamann M."/>
            <person name="Seiler S."/>
            <person name="Dunlap J.C."/>
            <person name="Radford A."/>
            <person name="Aramayo R."/>
            <person name="Natvig D.O."/>
            <person name="Alex L.A."/>
            <person name="Mannhaupt G."/>
            <person name="Ebbole D.J."/>
            <person name="Freitag M."/>
            <person name="Paulsen I."/>
            <person name="Sachs M.S."/>
            <person name="Lander E.S."/>
            <person name="Nusbaum C."/>
            <person name="Birren B.W."/>
        </authorList>
    </citation>
    <scope>NUCLEOTIDE SEQUENCE [LARGE SCALE GENOMIC DNA]</scope>
    <source>
        <strain>ATCC 24698 / 74-OR23-1A / CBS 708.71 / DSM 1257 / FGSC 987</strain>
    </source>
</reference>
<keyword id="KW-0963">Cytoplasm</keyword>
<keyword id="KW-0285">Flavoprotein</keyword>
<keyword id="KW-0288">FMN</keyword>
<keyword id="KW-0479">Metal-binding</keyword>
<keyword id="KW-0507">mRNA processing</keyword>
<keyword id="KW-0520">NAD</keyword>
<keyword id="KW-0521">NADP</keyword>
<keyword id="KW-0539">Nucleus</keyword>
<keyword id="KW-0560">Oxidoreductase</keyword>
<keyword id="KW-1185">Reference proteome</keyword>
<keyword id="KW-0677">Repeat</keyword>
<keyword id="KW-0819">tRNA processing</keyword>
<keyword id="KW-0862">Zinc</keyword>
<keyword id="KW-0863">Zinc-finger</keyword>
<evidence type="ECO:0000250" key="1">
    <source>
        <dbReference type="UniProtKB" id="Q06053"/>
    </source>
</evidence>
<evidence type="ECO:0000250" key="2">
    <source>
        <dbReference type="UniProtKB" id="Q5SMC7"/>
    </source>
</evidence>
<evidence type="ECO:0000250" key="3">
    <source>
        <dbReference type="UniProtKB" id="Q9UTH9"/>
    </source>
</evidence>
<evidence type="ECO:0000256" key="4">
    <source>
        <dbReference type="SAM" id="MobiDB-lite"/>
    </source>
</evidence>
<evidence type="ECO:0000305" key="5"/>
<comment type="function">
    <text evidence="1 3">Catalyzes the synthesis of dihydrouridine, a modified base found in the D-loop of most tRNAs. Specifically modifies U47 in cytoplasmic tRNAs (By similarity). Catalyzes the synthesis of dihydrouridine in some mRNAs, thereby affecting their translation (By similarity).</text>
</comment>
<comment type="catalytic activity">
    <reaction evidence="1">
        <text>5,6-dihydrouridine(47) in tRNA + NAD(+) = uridine(47) in tRNA + NADH + H(+)</text>
        <dbReference type="Rhea" id="RHEA:53364"/>
        <dbReference type="Rhea" id="RHEA-COMP:13539"/>
        <dbReference type="Rhea" id="RHEA-COMP:13540"/>
        <dbReference type="ChEBI" id="CHEBI:15378"/>
        <dbReference type="ChEBI" id="CHEBI:57540"/>
        <dbReference type="ChEBI" id="CHEBI:57945"/>
        <dbReference type="ChEBI" id="CHEBI:65315"/>
        <dbReference type="ChEBI" id="CHEBI:74443"/>
        <dbReference type="EC" id="1.3.1.89"/>
    </reaction>
    <physiologicalReaction direction="right-to-left" evidence="1">
        <dbReference type="Rhea" id="RHEA:53366"/>
    </physiologicalReaction>
</comment>
<comment type="catalytic activity">
    <reaction evidence="1">
        <text>5,6-dihydrouridine(47) in tRNA + NADP(+) = uridine(47) in tRNA + NADPH + H(+)</text>
        <dbReference type="Rhea" id="RHEA:53360"/>
        <dbReference type="Rhea" id="RHEA-COMP:13539"/>
        <dbReference type="Rhea" id="RHEA-COMP:13540"/>
        <dbReference type="ChEBI" id="CHEBI:15378"/>
        <dbReference type="ChEBI" id="CHEBI:57783"/>
        <dbReference type="ChEBI" id="CHEBI:58349"/>
        <dbReference type="ChEBI" id="CHEBI:65315"/>
        <dbReference type="ChEBI" id="CHEBI:74443"/>
        <dbReference type="EC" id="1.3.1.89"/>
    </reaction>
    <physiologicalReaction direction="right-to-left" evidence="1">
        <dbReference type="Rhea" id="RHEA:53362"/>
    </physiologicalReaction>
</comment>
<comment type="catalytic activity">
    <reaction evidence="3">
        <text>a 5,6-dihydrouridine in mRNA + NAD(+) = a uridine in mRNA + NADH + H(+)</text>
        <dbReference type="Rhea" id="RHEA:69851"/>
        <dbReference type="Rhea" id="RHEA-COMP:14658"/>
        <dbReference type="Rhea" id="RHEA-COMP:17789"/>
        <dbReference type="ChEBI" id="CHEBI:15378"/>
        <dbReference type="ChEBI" id="CHEBI:57540"/>
        <dbReference type="ChEBI" id="CHEBI:57945"/>
        <dbReference type="ChEBI" id="CHEBI:65315"/>
        <dbReference type="ChEBI" id="CHEBI:74443"/>
    </reaction>
    <physiologicalReaction direction="right-to-left" evidence="3">
        <dbReference type="Rhea" id="RHEA:69853"/>
    </physiologicalReaction>
</comment>
<comment type="catalytic activity">
    <reaction evidence="3">
        <text>a 5,6-dihydrouridine in mRNA + NADP(+) = a uridine in mRNA + NADPH + H(+)</text>
        <dbReference type="Rhea" id="RHEA:69855"/>
        <dbReference type="Rhea" id="RHEA-COMP:14658"/>
        <dbReference type="Rhea" id="RHEA-COMP:17789"/>
        <dbReference type="ChEBI" id="CHEBI:15378"/>
        <dbReference type="ChEBI" id="CHEBI:57783"/>
        <dbReference type="ChEBI" id="CHEBI:58349"/>
        <dbReference type="ChEBI" id="CHEBI:65315"/>
        <dbReference type="ChEBI" id="CHEBI:74443"/>
    </reaction>
    <physiologicalReaction direction="right-to-left" evidence="3">
        <dbReference type="Rhea" id="RHEA:69857"/>
    </physiologicalReaction>
</comment>
<comment type="cofactor">
    <cofactor evidence="2">
        <name>FMN</name>
        <dbReference type="ChEBI" id="CHEBI:58210"/>
    </cofactor>
</comment>
<comment type="subcellular location">
    <subcellularLocation>
        <location evidence="1">Cytoplasm</location>
    </subcellularLocation>
    <subcellularLocation>
        <location evidence="1">Nucleus</location>
    </subcellularLocation>
</comment>
<comment type="similarity">
    <text evidence="5">Belongs to the Dus family. Dus3 subfamily.</text>
</comment>
<protein>
    <recommendedName>
        <fullName>tRNA-dihydrouridine(47) synthase [NAD(P)(+)]</fullName>
        <ecNumber evidence="1">1.3.1.89</ecNumber>
    </recommendedName>
    <alternativeName>
        <fullName>mRNA-dihydrouridine synthase dus-3</fullName>
        <ecNumber evidence="3">1.3.1.-</ecNumber>
    </alternativeName>
    <alternativeName>
        <fullName>tRNA-dihydrouridine synthase 3</fullName>
    </alternativeName>
</protein>
<proteinExistence type="inferred from homology"/>
<dbReference type="EC" id="1.3.1.89" evidence="1"/>
<dbReference type="EC" id="1.3.1.-" evidence="3"/>
<dbReference type="EMBL" id="BX842633">
    <property type="protein sequence ID" value="CAE76445.1"/>
    <property type="molecule type" value="Genomic_DNA"/>
</dbReference>
<dbReference type="EMBL" id="CM002236">
    <property type="protein sequence ID" value="EAA35786.1"/>
    <property type="molecule type" value="Genomic_DNA"/>
</dbReference>
<dbReference type="RefSeq" id="XP_965022.1">
    <property type="nucleotide sequence ID" value="XM_959929.2"/>
</dbReference>
<dbReference type="SMR" id="Q7SG01"/>
<dbReference type="FunCoup" id="Q7SG01">
    <property type="interactions" value="872"/>
</dbReference>
<dbReference type="STRING" id="367110.Q7SG01"/>
<dbReference type="PaxDb" id="5141-EFNCRP00000001936"/>
<dbReference type="EnsemblFungi" id="EAA35786">
    <property type="protein sequence ID" value="EAA35786"/>
    <property type="gene ID" value="NCU02619"/>
</dbReference>
<dbReference type="GeneID" id="3881162"/>
<dbReference type="KEGG" id="ncr:NCU02619"/>
<dbReference type="VEuPathDB" id="FungiDB:NCU02619"/>
<dbReference type="HOGENOM" id="CLU_013299_7_0_1"/>
<dbReference type="InParanoid" id="Q7SG01"/>
<dbReference type="OrthoDB" id="259935at2759"/>
<dbReference type="Proteomes" id="UP000001805">
    <property type="component" value="Chromosome 1, Linkage Group I"/>
</dbReference>
<dbReference type="GO" id="GO:0005737">
    <property type="term" value="C:cytoplasm"/>
    <property type="evidence" value="ECO:0007669"/>
    <property type="project" value="UniProtKB-SubCell"/>
</dbReference>
<dbReference type="GO" id="GO:0034399">
    <property type="term" value="C:nuclear periphery"/>
    <property type="evidence" value="ECO:0007669"/>
    <property type="project" value="EnsemblFungi"/>
</dbReference>
<dbReference type="GO" id="GO:0050660">
    <property type="term" value="F:flavin adenine dinucleotide binding"/>
    <property type="evidence" value="ECO:0007669"/>
    <property type="project" value="InterPro"/>
</dbReference>
<dbReference type="GO" id="GO:0106414">
    <property type="term" value="F:mRNA dihydrouridine synthase activity"/>
    <property type="evidence" value="ECO:0007669"/>
    <property type="project" value="RHEA"/>
</dbReference>
<dbReference type="GO" id="GO:0017150">
    <property type="term" value="F:tRNA dihydrouridine synthase activity"/>
    <property type="evidence" value="ECO:0000318"/>
    <property type="project" value="GO_Central"/>
</dbReference>
<dbReference type="GO" id="GO:0102265">
    <property type="term" value="F:tRNA-dihydrouridine47 synthase activity"/>
    <property type="evidence" value="ECO:0007669"/>
    <property type="project" value="UniProtKB-EC"/>
</dbReference>
<dbReference type="GO" id="GO:0008270">
    <property type="term" value="F:zinc ion binding"/>
    <property type="evidence" value="ECO:0007669"/>
    <property type="project" value="UniProtKB-KW"/>
</dbReference>
<dbReference type="GO" id="GO:0006397">
    <property type="term" value="P:mRNA processing"/>
    <property type="evidence" value="ECO:0007669"/>
    <property type="project" value="UniProtKB-KW"/>
</dbReference>
<dbReference type="CDD" id="cd02801">
    <property type="entry name" value="DUS_like_FMN"/>
    <property type="match status" value="1"/>
</dbReference>
<dbReference type="FunFam" id="3.20.20.70:FF:000145">
    <property type="entry name" value="tRNA-dihydrouridine(47) synthase [NAD(P)(+)]"/>
    <property type="match status" value="1"/>
</dbReference>
<dbReference type="Gene3D" id="3.20.20.70">
    <property type="entry name" value="Aldolase class I"/>
    <property type="match status" value="1"/>
</dbReference>
<dbReference type="InterPro" id="IPR013785">
    <property type="entry name" value="Aldolase_TIM"/>
</dbReference>
<dbReference type="InterPro" id="IPR035587">
    <property type="entry name" value="DUS-like_FMN-bd"/>
</dbReference>
<dbReference type="InterPro" id="IPR018517">
    <property type="entry name" value="tRNA_hU_synthase_CS"/>
</dbReference>
<dbReference type="PANTHER" id="PTHR45846">
    <property type="entry name" value="TRNA-DIHYDROURIDINE(47) SYNTHASE [NAD(P)(+)]-LIKE"/>
    <property type="match status" value="1"/>
</dbReference>
<dbReference type="PANTHER" id="PTHR45846:SF1">
    <property type="entry name" value="TRNA-DIHYDROURIDINE(47) SYNTHASE [NAD(P)(+)]-LIKE"/>
    <property type="match status" value="1"/>
</dbReference>
<dbReference type="Pfam" id="PF01207">
    <property type="entry name" value="Dus"/>
    <property type="match status" value="2"/>
</dbReference>
<dbReference type="SUPFAM" id="SSF51395">
    <property type="entry name" value="FMN-linked oxidoreductases"/>
    <property type="match status" value="1"/>
</dbReference>
<dbReference type="PROSITE" id="PS01136">
    <property type="entry name" value="UPF0034"/>
    <property type="match status" value="1"/>
</dbReference>
<feature type="chain" id="PRO_0000330244" description="tRNA-dihydrouridine(47) synthase [NAD(P)(+)]">
    <location>
        <begin position="1"/>
        <end position="737"/>
    </location>
</feature>
<feature type="zinc finger region" description="C3H1-type 1">
    <location>
        <begin position="142"/>
        <end position="166"/>
    </location>
</feature>
<feature type="zinc finger region" description="C3H1-type 2">
    <location>
        <begin position="187"/>
        <end position="208"/>
    </location>
</feature>
<feature type="region of interest" description="Disordered" evidence="4">
    <location>
        <begin position="1"/>
        <end position="127"/>
    </location>
</feature>
<feature type="compositionally biased region" description="Basic and acidic residues" evidence="4">
    <location>
        <begin position="1"/>
        <end position="11"/>
    </location>
</feature>
<feature type="compositionally biased region" description="Basic and acidic residues" evidence="4">
    <location>
        <begin position="24"/>
        <end position="33"/>
    </location>
</feature>
<feature type="compositionally biased region" description="Low complexity" evidence="4">
    <location>
        <begin position="35"/>
        <end position="44"/>
    </location>
</feature>
<feature type="compositionally biased region" description="Basic and acidic residues" evidence="4">
    <location>
        <begin position="57"/>
        <end position="82"/>
    </location>
</feature>
<feature type="active site" description="Proton donor" evidence="2">
    <location>
        <position position="439"/>
    </location>
</feature>
<feature type="binding site" evidence="2">
    <location>
        <begin position="332"/>
        <end position="334"/>
    </location>
    <ligand>
        <name>FMN</name>
        <dbReference type="ChEBI" id="CHEBI:58210"/>
    </ligand>
</feature>
<feature type="binding site" evidence="2">
    <location>
        <position position="407"/>
    </location>
    <ligand>
        <name>FMN</name>
        <dbReference type="ChEBI" id="CHEBI:58210"/>
    </ligand>
</feature>
<feature type="binding site" evidence="2">
    <location>
        <position position="479"/>
    </location>
    <ligand>
        <name>FMN</name>
        <dbReference type="ChEBI" id="CHEBI:58210"/>
    </ligand>
</feature>
<feature type="binding site" evidence="2">
    <location>
        <position position="520"/>
    </location>
    <ligand>
        <name>FMN</name>
        <dbReference type="ChEBI" id="CHEBI:58210"/>
    </ligand>
</feature>
<feature type="binding site" evidence="2">
    <location>
        <begin position="577"/>
        <end position="579"/>
    </location>
    <ligand>
        <name>FMN</name>
        <dbReference type="ChEBI" id="CHEBI:58210"/>
    </ligand>
</feature>
<feature type="binding site" evidence="2">
    <location>
        <begin position="601"/>
        <end position="602"/>
    </location>
    <ligand>
        <name>FMN</name>
        <dbReference type="ChEBI" id="CHEBI:58210"/>
    </ligand>
</feature>
<organism>
    <name type="scientific">Neurospora crassa (strain ATCC 24698 / 74-OR23-1A / CBS 708.71 / DSM 1257 / FGSC 987)</name>
    <dbReference type="NCBI Taxonomy" id="367110"/>
    <lineage>
        <taxon>Eukaryota</taxon>
        <taxon>Fungi</taxon>
        <taxon>Dikarya</taxon>
        <taxon>Ascomycota</taxon>
        <taxon>Pezizomycotina</taxon>
        <taxon>Sordariomycetes</taxon>
        <taxon>Sordariomycetidae</taxon>
        <taxon>Sordariales</taxon>
        <taxon>Sordariaceae</taxon>
        <taxon>Neurospora</taxon>
    </lineage>
</organism>
<name>DUS3_NEUCR</name>